<dbReference type="EC" id="6.1.1.21" evidence="1"/>
<dbReference type="EMBL" id="FM954972">
    <property type="protein sequence ID" value="CAV17615.1"/>
    <property type="molecule type" value="Genomic_DNA"/>
</dbReference>
<dbReference type="SMR" id="B7VJT9"/>
<dbReference type="STRING" id="575788.VS_0620"/>
<dbReference type="KEGG" id="vsp:VS_0620"/>
<dbReference type="PATRIC" id="fig|575788.5.peg.1972"/>
<dbReference type="eggNOG" id="COG0124">
    <property type="taxonomic scope" value="Bacteria"/>
</dbReference>
<dbReference type="HOGENOM" id="CLU_025113_1_1_6"/>
<dbReference type="Proteomes" id="UP000009100">
    <property type="component" value="Chromosome 1"/>
</dbReference>
<dbReference type="GO" id="GO:0005737">
    <property type="term" value="C:cytoplasm"/>
    <property type="evidence" value="ECO:0007669"/>
    <property type="project" value="UniProtKB-SubCell"/>
</dbReference>
<dbReference type="GO" id="GO:0005524">
    <property type="term" value="F:ATP binding"/>
    <property type="evidence" value="ECO:0007669"/>
    <property type="project" value="UniProtKB-UniRule"/>
</dbReference>
<dbReference type="GO" id="GO:0004821">
    <property type="term" value="F:histidine-tRNA ligase activity"/>
    <property type="evidence" value="ECO:0007669"/>
    <property type="project" value="UniProtKB-UniRule"/>
</dbReference>
<dbReference type="GO" id="GO:0006427">
    <property type="term" value="P:histidyl-tRNA aminoacylation"/>
    <property type="evidence" value="ECO:0007669"/>
    <property type="project" value="UniProtKB-UniRule"/>
</dbReference>
<dbReference type="CDD" id="cd00773">
    <property type="entry name" value="HisRS-like_core"/>
    <property type="match status" value="1"/>
</dbReference>
<dbReference type="CDD" id="cd00859">
    <property type="entry name" value="HisRS_anticodon"/>
    <property type="match status" value="1"/>
</dbReference>
<dbReference type="FunFam" id="3.30.930.10:FF:000005">
    <property type="entry name" value="Histidine--tRNA ligase"/>
    <property type="match status" value="1"/>
</dbReference>
<dbReference type="Gene3D" id="3.40.50.800">
    <property type="entry name" value="Anticodon-binding domain"/>
    <property type="match status" value="1"/>
</dbReference>
<dbReference type="Gene3D" id="3.30.930.10">
    <property type="entry name" value="Bira Bifunctional Protein, Domain 2"/>
    <property type="match status" value="1"/>
</dbReference>
<dbReference type="HAMAP" id="MF_00127">
    <property type="entry name" value="His_tRNA_synth"/>
    <property type="match status" value="1"/>
</dbReference>
<dbReference type="InterPro" id="IPR006195">
    <property type="entry name" value="aa-tRNA-synth_II"/>
</dbReference>
<dbReference type="InterPro" id="IPR045864">
    <property type="entry name" value="aa-tRNA-synth_II/BPL/LPL"/>
</dbReference>
<dbReference type="InterPro" id="IPR004154">
    <property type="entry name" value="Anticodon-bd"/>
</dbReference>
<dbReference type="InterPro" id="IPR036621">
    <property type="entry name" value="Anticodon-bd_dom_sf"/>
</dbReference>
<dbReference type="InterPro" id="IPR015807">
    <property type="entry name" value="His-tRNA-ligase"/>
</dbReference>
<dbReference type="InterPro" id="IPR041715">
    <property type="entry name" value="HisRS-like_core"/>
</dbReference>
<dbReference type="InterPro" id="IPR004516">
    <property type="entry name" value="HisRS/HisZ"/>
</dbReference>
<dbReference type="InterPro" id="IPR033656">
    <property type="entry name" value="HisRS_anticodon"/>
</dbReference>
<dbReference type="NCBIfam" id="TIGR00442">
    <property type="entry name" value="hisS"/>
    <property type="match status" value="1"/>
</dbReference>
<dbReference type="PANTHER" id="PTHR43707:SF1">
    <property type="entry name" value="HISTIDINE--TRNA LIGASE, MITOCHONDRIAL-RELATED"/>
    <property type="match status" value="1"/>
</dbReference>
<dbReference type="PANTHER" id="PTHR43707">
    <property type="entry name" value="HISTIDYL-TRNA SYNTHETASE"/>
    <property type="match status" value="1"/>
</dbReference>
<dbReference type="Pfam" id="PF03129">
    <property type="entry name" value="HGTP_anticodon"/>
    <property type="match status" value="1"/>
</dbReference>
<dbReference type="Pfam" id="PF13393">
    <property type="entry name" value="tRNA-synt_His"/>
    <property type="match status" value="1"/>
</dbReference>
<dbReference type="PIRSF" id="PIRSF001549">
    <property type="entry name" value="His-tRNA_synth"/>
    <property type="match status" value="1"/>
</dbReference>
<dbReference type="SUPFAM" id="SSF52954">
    <property type="entry name" value="Class II aaRS ABD-related"/>
    <property type="match status" value="1"/>
</dbReference>
<dbReference type="SUPFAM" id="SSF55681">
    <property type="entry name" value="Class II aaRS and biotin synthetases"/>
    <property type="match status" value="1"/>
</dbReference>
<dbReference type="PROSITE" id="PS50862">
    <property type="entry name" value="AA_TRNA_LIGASE_II"/>
    <property type="match status" value="1"/>
</dbReference>
<evidence type="ECO:0000255" key="1">
    <source>
        <dbReference type="HAMAP-Rule" id="MF_00127"/>
    </source>
</evidence>
<accession>B7VJT9</accession>
<name>SYH_VIBA3</name>
<proteinExistence type="inferred from homology"/>
<protein>
    <recommendedName>
        <fullName evidence="1">Histidine--tRNA ligase</fullName>
        <ecNumber evidence="1">6.1.1.21</ecNumber>
    </recommendedName>
    <alternativeName>
        <fullName evidence="1">Histidyl-tRNA synthetase</fullName>
        <shortName evidence="1">HisRS</shortName>
    </alternativeName>
</protein>
<reference key="1">
    <citation type="submission" date="2009-02" db="EMBL/GenBank/DDBJ databases">
        <title>Vibrio splendidus str. LGP32 complete genome.</title>
        <authorList>
            <person name="Mazel D."/>
            <person name="Le Roux F."/>
        </authorList>
    </citation>
    <scope>NUCLEOTIDE SEQUENCE [LARGE SCALE GENOMIC DNA]</scope>
    <source>
        <strain>LGP32</strain>
    </source>
</reference>
<sequence length="422" mass="47092">MAKNIQAIRGMNDCLPTQSPLWQKVESAVKSVVSAYGYNEVRMPIVEETNLFSRAVGEETDVVSKEMYTFDDRNGDSLTLRPEGTAGCVRSCIQNSLINRDEQRLWYMGPMFRHERPQKGRYRQFHQCGVEVFGLDGPDVDAELIMMTARLWRELGIDKHVRLELNSIGSQEDRVSYRTALVAFLEQHIDVLDEDCKRRMHTNPLRVLDTKNPDVQAILGDAPRLSEYLGEESKQHFAGLCELLDAVGIEYQVNERLVRGLDYYNRTVFEWITDSLGAQGTVCGGGRYDGLVEQLGGKATNAVGFAMGLERLVLMMETLELTEVRRSVDVYMVAAGEGTMIAGMQLANQLRDTVEGVRVMNHFGGGNFKKQFKRADKVGAVVALVLGENEVADNTVVLKDLVGGEQQTVSQTEVAEKVAALI</sequence>
<gene>
    <name evidence="1" type="primary">hisS</name>
    <name type="ordered locus">VS_0620</name>
</gene>
<feature type="chain" id="PRO_1000199165" description="Histidine--tRNA ligase">
    <location>
        <begin position="1"/>
        <end position="422"/>
    </location>
</feature>
<organism>
    <name type="scientific">Vibrio atlanticus (strain LGP32)</name>
    <name type="common">Vibrio splendidus (strain Mel32)</name>
    <dbReference type="NCBI Taxonomy" id="575788"/>
    <lineage>
        <taxon>Bacteria</taxon>
        <taxon>Pseudomonadati</taxon>
        <taxon>Pseudomonadota</taxon>
        <taxon>Gammaproteobacteria</taxon>
        <taxon>Vibrionales</taxon>
        <taxon>Vibrionaceae</taxon>
        <taxon>Vibrio</taxon>
    </lineage>
</organism>
<comment type="catalytic activity">
    <reaction evidence="1">
        <text>tRNA(His) + L-histidine + ATP = L-histidyl-tRNA(His) + AMP + diphosphate + H(+)</text>
        <dbReference type="Rhea" id="RHEA:17313"/>
        <dbReference type="Rhea" id="RHEA-COMP:9665"/>
        <dbReference type="Rhea" id="RHEA-COMP:9689"/>
        <dbReference type="ChEBI" id="CHEBI:15378"/>
        <dbReference type="ChEBI" id="CHEBI:30616"/>
        <dbReference type="ChEBI" id="CHEBI:33019"/>
        <dbReference type="ChEBI" id="CHEBI:57595"/>
        <dbReference type="ChEBI" id="CHEBI:78442"/>
        <dbReference type="ChEBI" id="CHEBI:78527"/>
        <dbReference type="ChEBI" id="CHEBI:456215"/>
        <dbReference type="EC" id="6.1.1.21"/>
    </reaction>
</comment>
<comment type="subunit">
    <text evidence="1">Homodimer.</text>
</comment>
<comment type="subcellular location">
    <subcellularLocation>
        <location evidence="1">Cytoplasm</location>
    </subcellularLocation>
</comment>
<comment type="similarity">
    <text evidence="1">Belongs to the class-II aminoacyl-tRNA synthetase family.</text>
</comment>
<keyword id="KW-0030">Aminoacyl-tRNA synthetase</keyword>
<keyword id="KW-0067">ATP-binding</keyword>
<keyword id="KW-0963">Cytoplasm</keyword>
<keyword id="KW-0436">Ligase</keyword>
<keyword id="KW-0547">Nucleotide-binding</keyword>
<keyword id="KW-0648">Protein biosynthesis</keyword>